<feature type="chain" id="PRO_0000322710" description="LexA repressor">
    <location>
        <begin position="1"/>
        <end position="224"/>
    </location>
</feature>
<feature type="DNA-binding region" description="H-T-H motif" evidence="1">
    <location>
        <begin position="31"/>
        <end position="51"/>
    </location>
</feature>
<feature type="active site" description="For autocatalytic cleavage activity" evidence="1">
    <location>
        <position position="142"/>
    </location>
</feature>
<feature type="active site" description="For autocatalytic cleavage activity" evidence="1">
    <location>
        <position position="179"/>
    </location>
</feature>
<feature type="site" description="Cleavage; by autolysis" evidence="1">
    <location>
        <begin position="107"/>
        <end position="108"/>
    </location>
</feature>
<evidence type="ECO:0000255" key="1">
    <source>
        <dbReference type="HAMAP-Rule" id="MF_00015"/>
    </source>
</evidence>
<keyword id="KW-0068">Autocatalytic cleavage</keyword>
<keyword id="KW-0227">DNA damage</keyword>
<keyword id="KW-0234">DNA repair</keyword>
<keyword id="KW-0235">DNA replication</keyword>
<keyword id="KW-0238">DNA-binding</keyword>
<keyword id="KW-0378">Hydrolase</keyword>
<keyword id="KW-0678">Repressor</keyword>
<keyword id="KW-0742">SOS response</keyword>
<keyword id="KW-0804">Transcription</keyword>
<keyword id="KW-0805">Transcription regulation</keyword>
<organism>
    <name type="scientific">Paracidovorax citrulli (strain AAC00-1)</name>
    <name type="common">Acidovorax citrulli</name>
    <dbReference type="NCBI Taxonomy" id="397945"/>
    <lineage>
        <taxon>Bacteria</taxon>
        <taxon>Pseudomonadati</taxon>
        <taxon>Pseudomonadota</taxon>
        <taxon>Betaproteobacteria</taxon>
        <taxon>Burkholderiales</taxon>
        <taxon>Comamonadaceae</taxon>
        <taxon>Paracidovorax</taxon>
    </lineage>
</organism>
<sequence length="224" mass="24266">MLDSPKLTARQQQILDLIQTAIARTGAPPTRAEIAAEFGFKSANAAEEHLQALARKGVIELVSGTSRGIRLRGEAVRSINAARGTQFHLPIPGISQLMLPLIGRVAAGSPILAEEHVDQTYSVEGSLFQHKPDYLLKVRGMSMRDAGIMDGDLLAVQSTREARNGQIIVARLGDEVTVKRLRRTAGAIELLPENPDYPIITVQPGESFEIEGLAVGLIRNTMLM</sequence>
<protein>
    <recommendedName>
        <fullName evidence="1">LexA repressor</fullName>
        <ecNumber evidence="1">3.4.21.88</ecNumber>
    </recommendedName>
</protein>
<accession>A1TQ93</accession>
<dbReference type="EC" id="3.4.21.88" evidence="1"/>
<dbReference type="EMBL" id="CP000512">
    <property type="protein sequence ID" value="ABM33131.1"/>
    <property type="molecule type" value="Genomic_DNA"/>
</dbReference>
<dbReference type="RefSeq" id="WP_011795657.1">
    <property type="nucleotide sequence ID" value="NC_008752.1"/>
</dbReference>
<dbReference type="SMR" id="A1TQ93"/>
<dbReference type="STRING" id="397945.Aave_2558"/>
<dbReference type="MEROPS" id="S24.001"/>
<dbReference type="GeneID" id="79792145"/>
<dbReference type="KEGG" id="aav:Aave_2558"/>
<dbReference type="eggNOG" id="COG1974">
    <property type="taxonomic scope" value="Bacteria"/>
</dbReference>
<dbReference type="HOGENOM" id="CLU_066192_45_3_4"/>
<dbReference type="OrthoDB" id="9802364at2"/>
<dbReference type="Proteomes" id="UP000002596">
    <property type="component" value="Chromosome"/>
</dbReference>
<dbReference type="GO" id="GO:0003677">
    <property type="term" value="F:DNA binding"/>
    <property type="evidence" value="ECO:0007669"/>
    <property type="project" value="UniProtKB-UniRule"/>
</dbReference>
<dbReference type="GO" id="GO:0004252">
    <property type="term" value="F:serine-type endopeptidase activity"/>
    <property type="evidence" value="ECO:0007669"/>
    <property type="project" value="UniProtKB-UniRule"/>
</dbReference>
<dbReference type="GO" id="GO:0006281">
    <property type="term" value="P:DNA repair"/>
    <property type="evidence" value="ECO:0007669"/>
    <property type="project" value="UniProtKB-UniRule"/>
</dbReference>
<dbReference type="GO" id="GO:0006260">
    <property type="term" value="P:DNA replication"/>
    <property type="evidence" value="ECO:0007669"/>
    <property type="project" value="UniProtKB-UniRule"/>
</dbReference>
<dbReference type="GO" id="GO:0045892">
    <property type="term" value="P:negative regulation of DNA-templated transcription"/>
    <property type="evidence" value="ECO:0007669"/>
    <property type="project" value="UniProtKB-UniRule"/>
</dbReference>
<dbReference type="GO" id="GO:0006508">
    <property type="term" value="P:proteolysis"/>
    <property type="evidence" value="ECO:0007669"/>
    <property type="project" value="InterPro"/>
</dbReference>
<dbReference type="GO" id="GO:0009432">
    <property type="term" value="P:SOS response"/>
    <property type="evidence" value="ECO:0007669"/>
    <property type="project" value="UniProtKB-UniRule"/>
</dbReference>
<dbReference type="CDD" id="cd06529">
    <property type="entry name" value="S24_LexA-like"/>
    <property type="match status" value="1"/>
</dbReference>
<dbReference type="FunFam" id="1.10.10.10:FF:000009">
    <property type="entry name" value="LexA repressor"/>
    <property type="match status" value="1"/>
</dbReference>
<dbReference type="FunFam" id="2.10.109.10:FF:000001">
    <property type="entry name" value="LexA repressor"/>
    <property type="match status" value="1"/>
</dbReference>
<dbReference type="Gene3D" id="2.10.109.10">
    <property type="entry name" value="Umud Fragment, subunit A"/>
    <property type="match status" value="1"/>
</dbReference>
<dbReference type="Gene3D" id="1.10.10.10">
    <property type="entry name" value="Winged helix-like DNA-binding domain superfamily/Winged helix DNA-binding domain"/>
    <property type="match status" value="1"/>
</dbReference>
<dbReference type="HAMAP" id="MF_00015">
    <property type="entry name" value="LexA"/>
    <property type="match status" value="1"/>
</dbReference>
<dbReference type="InterPro" id="IPR006200">
    <property type="entry name" value="LexA"/>
</dbReference>
<dbReference type="InterPro" id="IPR039418">
    <property type="entry name" value="LexA-like"/>
</dbReference>
<dbReference type="InterPro" id="IPR036286">
    <property type="entry name" value="LexA/Signal_pep-like_sf"/>
</dbReference>
<dbReference type="InterPro" id="IPR006199">
    <property type="entry name" value="LexA_DNA-bd_dom"/>
</dbReference>
<dbReference type="InterPro" id="IPR050077">
    <property type="entry name" value="LexA_repressor"/>
</dbReference>
<dbReference type="InterPro" id="IPR006197">
    <property type="entry name" value="Peptidase_S24_LexA"/>
</dbReference>
<dbReference type="InterPro" id="IPR015927">
    <property type="entry name" value="Peptidase_S24_S26A/B/C"/>
</dbReference>
<dbReference type="InterPro" id="IPR036388">
    <property type="entry name" value="WH-like_DNA-bd_sf"/>
</dbReference>
<dbReference type="InterPro" id="IPR036390">
    <property type="entry name" value="WH_DNA-bd_sf"/>
</dbReference>
<dbReference type="NCBIfam" id="TIGR00498">
    <property type="entry name" value="lexA"/>
    <property type="match status" value="1"/>
</dbReference>
<dbReference type="PANTHER" id="PTHR33516">
    <property type="entry name" value="LEXA REPRESSOR"/>
    <property type="match status" value="1"/>
</dbReference>
<dbReference type="PANTHER" id="PTHR33516:SF2">
    <property type="entry name" value="LEXA REPRESSOR-RELATED"/>
    <property type="match status" value="1"/>
</dbReference>
<dbReference type="Pfam" id="PF01726">
    <property type="entry name" value="LexA_DNA_bind"/>
    <property type="match status" value="1"/>
</dbReference>
<dbReference type="Pfam" id="PF00717">
    <property type="entry name" value="Peptidase_S24"/>
    <property type="match status" value="1"/>
</dbReference>
<dbReference type="PRINTS" id="PR00726">
    <property type="entry name" value="LEXASERPTASE"/>
</dbReference>
<dbReference type="SUPFAM" id="SSF51306">
    <property type="entry name" value="LexA/Signal peptidase"/>
    <property type="match status" value="1"/>
</dbReference>
<dbReference type="SUPFAM" id="SSF46785">
    <property type="entry name" value="Winged helix' DNA-binding domain"/>
    <property type="match status" value="1"/>
</dbReference>
<proteinExistence type="inferred from homology"/>
<name>LEXA_PARC0</name>
<reference key="1">
    <citation type="submission" date="2006-12" db="EMBL/GenBank/DDBJ databases">
        <title>Complete sequence of Acidovorax avenae subsp. citrulli AAC00-1.</title>
        <authorList>
            <person name="Copeland A."/>
            <person name="Lucas S."/>
            <person name="Lapidus A."/>
            <person name="Barry K."/>
            <person name="Detter J.C."/>
            <person name="Glavina del Rio T."/>
            <person name="Dalin E."/>
            <person name="Tice H."/>
            <person name="Pitluck S."/>
            <person name="Kiss H."/>
            <person name="Brettin T."/>
            <person name="Bruce D."/>
            <person name="Han C."/>
            <person name="Tapia R."/>
            <person name="Gilna P."/>
            <person name="Schmutz J."/>
            <person name="Larimer F."/>
            <person name="Land M."/>
            <person name="Hauser L."/>
            <person name="Kyrpides N."/>
            <person name="Kim E."/>
            <person name="Stahl D."/>
            <person name="Richardson P."/>
        </authorList>
    </citation>
    <scope>NUCLEOTIDE SEQUENCE [LARGE SCALE GENOMIC DNA]</scope>
    <source>
        <strain>AAC00-1</strain>
    </source>
</reference>
<comment type="function">
    <text evidence="1">Represses a number of genes involved in the response to DNA damage (SOS response), including recA and lexA. In the presence of single-stranded DNA, RecA interacts with LexA causing an autocatalytic cleavage which disrupts the DNA-binding part of LexA, leading to derepression of the SOS regulon and eventually DNA repair.</text>
</comment>
<comment type="catalytic activity">
    <reaction evidence="1">
        <text>Hydrolysis of Ala-|-Gly bond in repressor LexA.</text>
        <dbReference type="EC" id="3.4.21.88"/>
    </reaction>
</comment>
<comment type="subunit">
    <text evidence="1">Homodimer.</text>
</comment>
<comment type="similarity">
    <text evidence="1">Belongs to the peptidase S24 family.</text>
</comment>
<gene>
    <name evidence="1" type="primary">lexA</name>
    <name type="ordered locus">Aave_2558</name>
</gene>